<keyword id="KW-1185">Reference proteome</keyword>
<gene>
    <name type="primary">ykgS</name>
    <name evidence="2" type="synonym">ykgU</name>
    <name type="ordered locus">b4688</name>
</gene>
<evidence type="ECO:0000269" key="1">
    <source>
    </source>
</evidence>
<evidence type="ECO:0000303" key="2">
    <source>
    </source>
</evidence>
<evidence type="ECO:0000305" key="3"/>
<protein>
    <recommendedName>
        <fullName evidence="2">Protein YkgS</fullName>
    </recommendedName>
</protein>
<proteinExistence type="evidence at protein level"/>
<feature type="chain" id="PRO_0000445156" description="Protein YkgS">
    <location>
        <begin position="1"/>
        <end position="42"/>
    </location>
</feature>
<sequence>MRMIGLLYDFKDYASKMAENMARLAALLHYFSGDGGDISVTG</sequence>
<dbReference type="EMBL" id="U00096">
    <property type="protein sequence ID" value="AYC08171.1"/>
    <property type="molecule type" value="Genomic_DNA"/>
</dbReference>
<dbReference type="EnsemblBacteria" id="AYC08171">
    <property type="protein sequence ID" value="AYC08171"/>
    <property type="gene ID" value="b4688"/>
</dbReference>
<dbReference type="InParanoid" id="P0DPM8"/>
<dbReference type="BioCyc" id="EcoCyc:MONOMER0-4436"/>
<dbReference type="PRO" id="PR:P0DPM8"/>
<dbReference type="Proteomes" id="UP000000625">
    <property type="component" value="Chromosome"/>
</dbReference>
<dbReference type="InterPro" id="IPR025048">
    <property type="entry name" value="DUF3987"/>
</dbReference>
<dbReference type="Pfam" id="PF13148">
    <property type="entry name" value="DUF3987"/>
    <property type="match status" value="1"/>
</dbReference>
<reference key="1">
    <citation type="journal article" date="1997" name="Science">
        <title>The complete genome sequence of Escherichia coli K-12.</title>
        <authorList>
            <person name="Blattner F.R."/>
            <person name="Plunkett G. III"/>
            <person name="Bloch C.A."/>
            <person name="Perna N.T."/>
            <person name="Burland V."/>
            <person name="Riley M."/>
            <person name="Collado-Vides J."/>
            <person name="Glasner J.D."/>
            <person name="Rode C.K."/>
            <person name="Mayhew G.F."/>
            <person name="Gregor J."/>
            <person name="Davis N.W."/>
            <person name="Kirkpatrick H.A."/>
            <person name="Goeden M.A."/>
            <person name="Rose D.J."/>
            <person name="Mau B."/>
            <person name="Shao Y."/>
        </authorList>
    </citation>
    <scope>NUCLEOTIDE SEQUENCE [LARGE SCALE GENOMIC DNA]</scope>
    <source>
        <strain>K12 / MG1655 / ATCC 47076</strain>
    </source>
</reference>
<reference key="2">
    <citation type="journal article" date="2018" name="Proteomics">
        <title>Identifying new small proteins in Escherichia coli.</title>
        <authorList>
            <person name="VanOrsdel C.E."/>
            <person name="Kelly J.P."/>
            <person name="Burke B.N."/>
            <person name="Lein C.D."/>
            <person name="Oufiero C.E."/>
            <person name="Sanchez J.F."/>
            <person name="Wimmers L.E."/>
            <person name="Hearn D.J."/>
            <person name="Abuikhdair F.J."/>
            <person name="Barnhart K.R."/>
            <person name="Duley M.L."/>
            <person name="Ernst S.E.G."/>
            <person name="Kenerson B.A."/>
            <person name="Serafin A.J."/>
            <person name="Hemm M.R."/>
        </authorList>
    </citation>
    <scope>IDENTIFICATION</scope>
    <scope>INDUCTION</scope>
</reference>
<name>YKGS_ECOLI</name>
<comment type="induction">
    <text evidence="1">Expressed in both exponential and stationary phase; expression is considerably higher during stationary phase and 2 proteins of slightly different sizes are seen (at protein level).</text>
</comment>
<comment type="miscellaneous">
    <text evidence="3">The sequence of this protein is also found in a much larger protein (yfjI, AC P52124) found in another position within the CP4-57 prophage region on the E.coli chromosome.</text>
</comment>
<organism>
    <name type="scientific">Escherichia coli (strain K12)</name>
    <dbReference type="NCBI Taxonomy" id="83333"/>
    <lineage>
        <taxon>Bacteria</taxon>
        <taxon>Pseudomonadati</taxon>
        <taxon>Pseudomonadota</taxon>
        <taxon>Gammaproteobacteria</taxon>
        <taxon>Enterobacterales</taxon>
        <taxon>Enterobacteriaceae</taxon>
        <taxon>Escherichia</taxon>
    </lineage>
</organism>
<accession>P0DPM8</accession>
<accession>A0A385XLZ3</accession>